<gene>
    <name evidence="1" type="primary">xseA</name>
    <name type="ordered locus">Cj0325</name>
</gene>
<name>EX7L_CAMJE</name>
<feature type="chain" id="PRO_0000197832" description="Exodeoxyribonuclease 7 large subunit">
    <location>
        <begin position="1"/>
        <end position="387"/>
    </location>
</feature>
<comment type="function">
    <text evidence="1">Bidirectionally degrades single-stranded DNA into large acid-insoluble oligonucleotides, which are then degraded further into small acid-soluble oligonucleotides.</text>
</comment>
<comment type="catalytic activity">
    <reaction evidence="1">
        <text>Exonucleolytic cleavage in either 5'- to 3'- or 3'- to 5'-direction to yield nucleoside 5'-phosphates.</text>
        <dbReference type="EC" id="3.1.11.6"/>
    </reaction>
</comment>
<comment type="subunit">
    <text evidence="1">Heterooligomer composed of large and small subunits.</text>
</comment>
<comment type="subcellular location">
    <subcellularLocation>
        <location evidence="1">Cytoplasm</location>
    </subcellularLocation>
</comment>
<comment type="similarity">
    <text evidence="1">Belongs to the XseA family.</text>
</comment>
<accession>Q9PIH4</accession>
<accession>Q0PBI4</accession>
<reference key="1">
    <citation type="journal article" date="2000" name="Nature">
        <title>The genome sequence of the food-borne pathogen Campylobacter jejuni reveals hypervariable sequences.</title>
        <authorList>
            <person name="Parkhill J."/>
            <person name="Wren B.W."/>
            <person name="Mungall K.L."/>
            <person name="Ketley J.M."/>
            <person name="Churcher C.M."/>
            <person name="Basham D."/>
            <person name="Chillingworth T."/>
            <person name="Davies R.M."/>
            <person name="Feltwell T."/>
            <person name="Holroyd S."/>
            <person name="Jagels K."/>
            <person name="Karlyshev A.V."/>
            <person name="Moule S."/>
            <person name="Pallen M.J."/>
            <person name="Penn C.W."/>
            <person name="Quail M.A."/>
            <person name="Rajandream M.A."/>
            <person name="Rutherford K.M."/>
            <person name="van Vliet A.H.M."/>
            <person name="Whitehead S."/>
            <person name="Barrell B.G."/>
        </authorList>
    </citation>
    <scope>NUCLEOTIDE SEQUENCE [LARGE SCALE GENOMIC DNA]</scope>
    <source>
        <strain>ATCC 700819 / NCTC 11168</strain>
    </source>
</reference>
<organism>
    <name type="scientific">Campylobacter jejuni subsp. jejuni serotype O:2 (strain ATCC 700819 / NCTC 11168)</name>
    <dbReference type="NCBI Taxonomy" id="192222"/>
    <lineage>
        <taxon>Bacteria</taxon>
        <taxon>Pseudomonadati</taxon>
        <taxon>Campylobacterota</taxon>
        <taxon>Epsilonproteobacteria</taxon>
        <taxon>Campylobacterales</taxon>
        <taxon>Campylobacteraceae</taxon>
        <taxon>Campylobacter</taxon>
    </lineage>
</organism>
<dbReference type="EC" id="3.1.11.6" evidence="1"/>
<dbReference type="EMBL" id="AL111168">
    <property type="protein sequence ID" value="CAL34476.1"/>
    <property type="molecule type" value="Genomic_DNA"/>
</dbReference>
<dbReference type="PIR" id="A81452">
    <property type="entry name" value="A81452"/>
</dbReference>
<dbReference type="RefSeq" id="WP_002851089.1">
    <property type="nucleotide sequence ID" value="NZ_SZUC01000004.1"/>
</dbReference>
<dbReference type="RefSeq" id="YP_002343763.1">
    <property type="nucleotide sequence ID" value="NC_002163.1"/>
</dbReference>
<dbReference type="SMR" id="Q9PIH4"/>
<dbReference type="IntAct" id="Q9PIH4">
    <property type="interactions" value="59"/>
</dbReference>
<dbReference type="STRING" id="192222.Cj0325"/>
<dbReference type="PaxDb" id="192222-Cj0325"/>
<dbReference type="EnsemblBacteria" id="CAL34476">
    <property type="protein sequence ID" value="CAL34476"/>
    <property type="gene ID" value="Cj0325"/>
</dbReference>
<dbReference type="GeneID" id="904649"/>
<dbReference type="KEGG" id="cje:Cj0325"/>
<dbReference type="PATRIC" id="fig|192222.6.peg.317"/>
<dbReference type="eggNOG" id="COG1570">
    <property type="taxonomic scope" value="Bacteria"/>
</dbReference>
<dbReference type="HOGENOM" id="CLU_023625_2_0_7"/>
<dbReference type="OrthoDB" id="9802795at2"/>
<dbReference type="Proteomes" id="UP000000799">
    <property type="component" value="Chromosome"/>
</dbReference>
<dbReference type="GO" id="GO:0005737">
    <property type="term" value="C:cytoplasm"/>
    <property type="evidence" value="ECO:0007669"/>
    <property type="project" value="UniProtKB-SubCell"/>
</dbReference>
<dbReference type="GO" id="GO:0009318">
    <property type="term" value="C:exodeoxyribonuclease VII complex"/>
    <property type="evidence" value="ECO:0007669"/>
    <property type="project" value="InterPro"/>
</dbReference>
<dbReference type="GO" id="GO:0008855">
    <property type="term" value="F:exodeoxyribonuclease VII activity"/>
    <property type="evidence" value="ECO:0007669"/>
    <property type="project" value="UniProtKB-UniRule"/>
</dbReference>
<dbReference type="GO" id="GO:0003676">
    <property type="term" value="F:nucleic acid binding"/>
    <property type="evidence" value="ECO:0007669"/>
    <property type="project" value="InterPro"/>
</dbReference>
<dbReference type="GO" id="GO:0006308">
    <property type="term" value="P:DNA catabolic process"/>
    <property type="evidence" value="ECO:0007669"/>
    <property type="project" value="UniProtKB-UniRule"/>
</dbReference>
<dbReference type="CDD" id="cd04489">
    <property type="entry name" value="ExoVII_LU_OBF"/>
    <property type="match status" value="1"/>
</dbReference>
<dbReference type="HAMAP" id="MF_00378">
    <property type="entry name" value="Exonuc_7_L"/>
    <property type="match status" value="1"/>
</dbReference>
<dbReference type="InterPro" id="IPR003753">
    <property type="entry name" value="Exonuc_VII_L"/>
</dbReference>
<dbReference type="InterPro" id="IPR020579">
    <property type="entry name" value="Exonuc_VII_lsu_C"/>
</dbReference>
<dbReference type="InterPro" id="IPR025824">
    <property type="entry name" value="OB-fold_nuc-bd_dom"/>
</dbReference>
<dbReference type="NCBIfam" id="TIGR00237">
    <property type="entry name" value="xseA"/>
    <property type="match status" value="1"/>
</dbReference>
<dbReference type="PANTHER" id="PTHR30008">
    <property type="entry name" value="EXODEOXYRIBONUCLEASE 7 LARGE SUBUNIT"/>
    <property type="match status" value="1"/>
</dbReference>
<dbReference type="PANTHER" id="PTHR30008:SF0">
    <property type="entry name" value="EXODEOXYRIBONUCLEASE 7 LARGE SUBUNIT"/>
    <property type="match status" value="1"/>
</dbReference>
<dbReference type="Pfam" id="PF02601">
    <property type="entry name" value="Exonuc_VII_L"/>
    <property type="match status" value="1"/>
</dbReference>
<dbReference type="Pfam" id="PF13742">
    <property type="entry name" value="tRNA_anti_2"/>
    <property type="match status" value="1"/>
</dbReference>
<keyword id="KW-0963">Cytoplasm</keyword>
<keyword id="KW-0269">Exonuclease</keyword>
<keyword id="KW-0378">Hydrolase</keyword>
<keyword id="KW-0540">Nuclease</keyword>
<keyword id="KW-1185">Reference proteome</keyword>
<proteinExistence type="inferred from homology"/>
<protein>
    <recommendedName>
        <fullName evidence="1">Exodeoxyribonuclease 7 large subunit</fullName>
        <ecNumber evidence="1">3.1.11.6</ecNumber>
    </recommendedName>
    <alternativeName>
        <fullName evidence="1">Exodeoxyribonuclease VII large subunit</fullName>
        <shortName evidence="1">Exonuclease VII large subunit</shortName>
    </alternativeName>
</protein>
<evidence type="ECO:0000255" key="1">
    <source>
        <dbReference type="HAMAP-Rule" id="MF_00378"/>
    </source>
</evidence>
<sequence length="387" mass="44088">MTPTELNLKAKALLETHFDDIVLSGEISKITLHGSGHWYFDLKDERSSIACAMFKGANLKVGFKPAVGDFLELCGSVSLYPESGRYQFIATSMKKAGFGDLEAQFLALKERLQKEGLFDPRFKKSLPKFPKKVGIITSKTSAALQDMLKLIHQKEYFLAKIYIFDALTQGNNAPFSLIQALKKADDMDLDVLIIARGGGSREDLFCFNDENLAREIFKAKTPIISAIGHEIDYVISDFVADFRAPTPSAAIDTLFYSKLDIEQSLDLMEEKLMQLWNYKIQNYENLLLNLSKFFKFNSLPKIIDEKIKQSHNIEKQLNHLLANQMRYNELKLDKLQNAYLQHENFFNKSKKFICIRKNGKIANLEDLKSDDIVILSSQTSQKEAKIL</sequence>